<reference key="1">
    <citation type="journal article" date="2006" name="J. Bacteriol.">
        <title>Complete genome sequence of Yersinia pestis strains Antiqua and Nepal516: evidence of gene reduction in an emerging pathogen.</title>
        <authorList>
            <person name="Chain P.S.G."/>
            <person name="Hu P."/>
            <person name="Malfatti S.A."/>
            <person name="Radnedge L."/>
            <person name="Larimer F."/>
            <person name="Vergez L.M."/>
            <person name="Worsham P."/>
            <person name="Chu M.C."/>
            <person name="Andersen G.L."/>
        </authorList>
    </citation>
    <scope>NUCLEOTIDE SEQUENCE [LARGE SCALE GENOMIC DNA]</scope>
    <source>
        <strain>Nepal516</strain>
    </source>
</reference>
<reference key="2">
    <citation type="submission" date="2009-04" db="EMBL/GenBank/DDBJ databases">
        <title>Yersinia pestis Nepal516A whole genome shotgun sequencing project.</title>
        <authorList>
            <person name="Plunkett G. III"/>
            <person name="Anderson B.D."/>
            <person name="Baumler D.J."/>
            <person name="Burland V."/>
            <person name="Cabot E.L."/>
            <person name="Glasner J.D."/>
            <person name="Mau B."/>
            <person name="Neeno-Eckwall E."/>
            <person name="Perna N.T."/>
            <person name="Munk A.C."/>
            <person name="Tapia R."/>
            <person name="Green L.D."/>
            <person name="Rogers Y.C."/>
            <person name="Detter J.C."/>
            <person name="Bruce D.C."/>
            <person name="Brettin T.S."/>
        </authorList>
    </citation>
    <scope>NUCLEOTIDE SEQUENCE [LARGE SCALE GENOMIC DNA]</scope>
    <source>
        <strain>Nepal516</strain>
    </source>
</reference>
<dbReference type="EC" id="1.8.4.12" evidence="1"/>
<dbReference type="EMBL" id="CP000305">
    <property type="protein sequence ID" value="ABG17954.1"/>
    <property type="molecule type" value="Genomic_DNA"/>
</dbReference>
<dbReference type="EMBL" id="ACNQ01000009">
    <property type="protein sequence ID" value="EEO77073.1"/>
    <property type="molecule type" value="Genomic_DNA"/>
</dbReference>
<dbReference type="RefSeq" id="WP_002211677.1">
    <property type="nucleotide sequence ID" value="NZ_ACNQ01000009.1"/>
</dbReference>
<dbReference type="SMR" id="Q1CJ76"/>
<dbReference type="GeneID" id="57976510"/>
<dbReference type="KEGG" id="ypn:YPN_1624"/>
<dbReference type="HOGENOM" id="CLU_031040_8_5_6"/>
<dbReference type="Proteomes" id="UP000008936">
    <property type="component" value="Chromosome"/>
</dbReference>
<dbReference type="GO" id="GO:0005737">
    <property type="term" value="C:cytoplasm"/>
    <property type="evidence" value="ECO:0007669"/>
    <property type="project" value="TreeGrafter"/>
</dbReference>
<dbReference type="GO" id="GO:0033743">
    <property type="term" value="F:peptide-methionine (R)-S-oxide reductase activity"/>
    <property type="evidence" value="ECO:0007669"/>
    <property type="project" value="UniProtKB-UniRule"/>
</dbReference>
<dbReference type="GO" id="GO:0008270">
    <property type="term" value="F:zinc ion binding"/>
    <property type="evidence" value="ECO:0007669"/>
    <property type="project" value="UniProtKB-UniRule"/>
</dbReference>
<dbReference type="GO" id="GO:0030091">
    <property type="term" value="P:protein repair"/>
    <property type="evidence" value="ECO:0007669"/>
    <property type="project" value="InterPro"/>
</dbReference>
<dbReference type="GO" id="GO:0006979">
    <property type="term" value="P:response to oxidative stress"/>
    <property type="evidence" value="ECO:0007669"/>
    <property type="project" value="InterPro"/>
</dbReference>
<dbReference type="FunFam" id="2.170.150.20:FF:000001">
    <property type="entry name" value="Peptide methionine sulfoxide reductase MsrB"/>
    <property type="match status" value="1"/>
</dbReference>
<dbReference type="Gene3D" id="2.170.150.20">
    <property type="entry name" value="Peptide methionine sulfoxide reductase"/>
    <property type="match status" value="1"/>
</dbReference>
<dbReference type="HAMAP" id="MF_01400">
    <property type="entry name" value="MsrB"/>
    <property type="match status" value="1"/>
</dbReference>
<dbReference type="InterPro" id="IPR028427">
    <property type="entry name" value="Met_Sox_Rdtase_MsrB"/>
</dbReference>
<dbReference type="InterPro" id="IPR002579">
    <property type="entry name" value="Met_Sox_Rdtase_MsrB_dom"/>
</dbReference>
<dbReference type="InterPro" id="IPR011057">
    <property type="entry name" value="Mss4-like_sf"/>
</dbReference>
<dbReference type="NCBIfam" id="TIGR00357">
    <property type="entry name" value="peptide-methionine (R)-S-oxide reductase MsrB"/>
    <property type="match status" value="1"/>
</dbReference>
<dbReference type="PANTHER" id="PTHR10173">
    <property type="entry name" value="METHIONINE SULFOXIDE REDUCTASE"/>
    <property type="match status" value="1"/>
</dbReference>
<dbReference type="PANTHER" id="PTHR10173:SF52">
    <property type="entry name" value="METHIONINE-R-SULFOXIDE REDUCTASE B1"/>
    <property type="match status" value="1"/>
</dbReference>
<dbReference type="Pfam" id="PF01641">
    <property type="entry name" value="SelR"/>
    <property type="match status" value="1"/>
</dbReference>
<dbReference type="SUPFAM" id="SSF51316">
    <property type="entry name" value="Mss4-like"/>
    <property type="match status" value="1"/>
</dbReference>
<dbReference type="PROSITE" id="PS51790">
    <property type="entry name" value="MSRB"/>
    <property type="match status" value="1"/>
</dbReference>
<feature type="chain" id="PRO_1000068303" description="Peptide methionine sulfoxide reductase MsrB">
    <location>
        <begin position="1"/>
        <end position="137"/>
    </location>
</feature>
<feature type="domain" description="MsrB" evidence="2">
    <location>
        <begin position="7"/>
        <end position="129"/>
    </location>
</feature>
<feature type="active site" description="Nucleophile" evidence="2">
    <location>
        <position position="118"/>
    </location>
</feature>
<feature type="binding site" evidence="2">
    <location>
        <position position="46"/>
    </location>
    <ligand>
        <name>Zn(2+)</name>
        <dbReference type="ChEBI" id="CHEBI:29105"/>
    </ligand>
</feature>
<feature type="binding site" evidence="2">
    <location>
        <position position="49"/>
    </location>
    <ligand>
        <name>Zn(2+)</name>
        <dbReference type="ChEBI" id="CHEBI:29105"/>
    </ligand>
</feature>
<feature type="binding site" evidence="2">
    <location>
        <position position="95"/>
    </location>
    <ligand>
        <name>Zn(2+)</name>
        <dbReference type="ChEBI" id="CHEBI:29105"/>
    </ligand>
</feature>
<feature type="binding site" evidence="2">
    <location>
        <position position="98"/>
    </location>
    <ligand>
        <name>Zn(2+)</name>
        <dbReference type="ChEBI" id="CHEBI:29105"/>
    </ligand>
</feature>
<gene>
    <name evidence="1" type="primary">msrB</name>
    <name type="ordered locus">YPN_1624</name>
    <name type="ORF">YP516_1807</name>
</gene>
<evidence type="ECO:0000255" key="1">
    <source>
        <dbReference type="HAMAP-Rule" id="MF_01400"/>
    </source>
</evidence>
<evidence type="ECO:0000255" key="2">
    <source>
        <dbReference type="PROSITE-ProRule" id="PRU01126"/>
    </source>
</evidence>
<accession>Q1CJ76</accession>
<accession>C4GSR3</accession>
<comment type="catalytic activity">
    <reaction evidence="1">
        <text>L-methionyl-[protein] + [thioredoxin]-disulfide + H2O = L-methionyl-(R)-S-oxide-[protein] + [thioredoxin]-dithiol</text>
        <dbReference type="Rhea" id="RHEA:24164"/>
        <dbReference type="Rhea" id="RHEA-COMP:10698"/>
        <dbReference type="Rhea" id="RHEA-COMP:10700"/>
        <dbReference type="Rhea" id="RHEA-COMP:12313"/>
        <dbReference type="Rhea" id="RHEA-COMP:12314"/>
        <dbReference type="ChEBI" id="CHEBI:15377"/>
        <dbReference type="ChEBI" id="CHEBI:16044"/>
        <dbReference type="ChEBI" id="CHEBI:29950"/>
        <dbReference type="ChEBI" id="CHEBI:45764"/>
        <dbReference type="ChEBI" id="CHEBI:50058"/>
        <dbReference type="EC" id="1.8.4.12"/>
    </reaction>
</comment>
<comment type="cofactor">
    <cofactor evidence="1">
        <name>Zn(2+)</name>
        <dbReference type="ChEBI" id="CHEBI:29105"/>
    </cofactor>
    <text evidence="1">Binds 1 zinc ion per subunit. The zinc ion is important for the structural integrity of the protein.</text>
</comment>
<comment type="similarity">
    <text evidence="1">Belongs to the MsrB Met sulfoxide reductase family.</text>
</comment>
<keyword id="KW-0479">Metal-binding</keyword>
<keyword id="KW-0560">Oxidoreductase</keyword>
<keyword id="KW-0862">Zinc</keyword>
<sequence length="137" mass="15515">MAKELNPTENIEKLSDIQRYVTQERGTEAPFTGKLLHNKRDGVYQCLCCHQPLFISESKFDSGCGWPSFYQPIDADSIRYIDDYSHNMHRIEIRCGNCDAHLGHVFPDGPQPTGERYCINSASLNFVDDQNGEQTAG</sequence>
<proteinExistence type="inferred from homology"/>
<name>MSRB_YERPN</name>
<organism>
    <name type="scientific">Yersinia pestis bv. Antiqua (strain Nepal516)</name>
    <dbReference type="NCBI Taxonomy" id="377628"/>
    <lineage>
        <taxon>Bacteria</taxon>
        <taxon>Pseudomonadati</taxon>
        <taxon>Pseudomonadota</taxon>
        <taxon>Gammaproteobacteria</taxon>
        <taxon>Enterobacterales</taxon>
        <taxon>Yersiniaceae</taxon>
        <taxon>Yersinia</taxon>
    </lineage>
</organism>
<protein>
    <recommendedName>
        <fullName evidence="1">Peptide methionine sulfoxide reductase MsrB</fullName>
        <ecNumber evidence="1">1.8.4.12</ecNumber>
    </recommendedName>
    <alternativeName>
        <fullName evidence="1">Peptide-methionine (R)-S-oxide reductase</fullName>
    </alternativeName>
</protein>